<gene>
    <name type="primary">crtB</name>
    <name type="synonym">phyA</name>
    <name type="ordered locus">BQ2027_MB3430C</name>
</gene>
<feature type="chain" id="PRO_0000067432" description="Phytoene synthase">
    <location>
        <begin position="1"/>
        <end position="302"/>
    </location>
</feature>
<accession>P65861</accession>
<accession>A0A1R3Y446</accession>
<accession>Q50728</accession>
<accession>X2BN51</accession>
<comment type="function">
    <text evidence="2">Involved in the biosynthesis of carotenoids. Catalyzes the condensation of two molecules of geranylgeranyl diphosphate (GGPP) to give prephytoene diphosphate (PPPP) and the subsequent rearrangement of the cyclopropylcarbinyl intermediate to yield phytoene (Probable).</text>
</comment>
<comment type="cofactor">
    <cofactor evidence="1">
        <name>ATP</name>
        <dbReference type="ChEBI" id="CHEBI:30616"/>
    </cofactor>
    <text evidence="1">ATP is required for the transferase activity but it does not seem to be hydrolyzed during the reaction.</text>
</comment>
<comment type="cofactor">
    <cofactor evidence="1">
        <name>Mn(2+)</name>
        <dbReference type="ChEBI" id="CHEBI:29035"/>
    </cofactor>
    <cofactor evidence="1">
        <name>Mg(2+)</name>
        <dbReference type="ChEBI" id="CHEBI:18420"/>
    </cofactor>
</comment>
<comment type="pathway">
    <text>Carotenoid biosynthesis; phytoene biosynthesis.</text>
</comment>
<comment type="similarity">
    <text evidence="2">Belongs to the phytoene/squalene synthase family.</text>
</comment>
<proteinExistence type="inferred from homology"/>
<organism>
    <name type="scientific">Mycobacterium bovis (strain ATCC BAA-935 / AF2122/97)</name>
    <dbReference type="NCBI Taxonomy" id="233413"/>
    <lineage>
        <taxon>Bacteria</taxon>
        <taxon>Bacillati</taxon>
        <taxon>Actinomycetota</taxon>
        <taxon>Actinomycetes</taxon>
        <taxon>Mycobacteriales</taxon>
        <taxon>Mycobacteriaceae</taxon>
        <taxon>Mycobacterium</taxon>
        <taxon>Mycobacterium tuberculosis complex</taxon>
    </lineage>
</organism>
<name>CRTB_MYCBO</name>
<evidence type="ECO:0000250" key="1"/>
<evidence type="ECO:0000305" key="2"/>
<reference key="1">
    <citation type="journal article" date="2003" name="Proc. Natl. Acad. Sci. U.S.A.">
        <title>The complete genome sequence of Mycobacterium bovis.</title>
        <authorList>
            <person name="Garnier T."/>
            <person name="Eiglmeier K."/>
            <person name="Camus J.-C."/>
            <person name="Medina N."/>
            <person name="Mansoor H."/>
            <person name="Pryor M."/>
            <person name="Duthoy S."/>
            <person name="Grondin S."/>
            <person name="Lacroix C."/>
            <person name="Monsempe C."/>
            <person name="Simon S."/>
            <person name="Harris B."/>
            <person name="Atkin R."/>
            <person name="Doggett J."/>
            <person name="Mayes R."/>
            <person name="Keating L."/>
            <person name="Wheeler P.R."/>
            <person name="Parkhill J."/>
            <person name="Barrell B.G."/>
            <person name="Cole S.T."/>
            <person name="Gordon S.V."/>
            <person name="Hewinson R.G."/>
        </authorList>
    </citation>
    <scope>NUCLEOTIDE SEQUENCE [LARGE SCALE GENOMIC DNA]</scope>
    <source>
        <strain>ATCC BAA-935 / AF2122/97</strain>
    </source>
</reference>
<reference key="2">
    <citation type="journal article" date="2017" name="Genome Announc.">
        <title>Updated reference genome sequence and annotation of Mycobacterium bovis AF2122/97.</title>
        <authorList>
            <person name="Malone K.M."/>
            <person name="Farrell D."/>
            <person name="Stuber T.P."/>
            <person name="Schubert O.T."/>
            <person name="Aebersold R."/>
            <person name="Robbe-Austerman S."/>
            <person name="Gordon S.V."/>
        </authorList>
    </citation>
    <scope>NUCLEOTIDE SEQUENCE [LARGE SCALE GENOMIC DNA]</scope>
    <scope>GENOME REANNOTATION</scope>
    <source>
        <strain>ATCC BAA-935 / AF2122/97</strain>
    </source>
</reference>
<keyword id="KW-0125">Carotenoid biosynthesis</keyword>
<keyword id="KW-0460">Magnesium</keyword>
<keyword id="KW-0464">Manganese</keyword>
<keyword id="KW-0479">Metal-binding</keyword>
<keyword id="KW-1185">Reference proteome</keyword>
<keyword id="KW-0808">Transferase</keyword>
<protein>
    <recommendedName>
        <fullName>Phytoene synthase</fullName>
        <shortName>PSase</shortName>
        <ecNumber>2.5.1.-</ecNumber>
    </recommendedName>
</protein>
<sequence length="302" mass="33142">MTEIEQAYRITESITRTAARNFYYGIRLLPREKRAALSAVYALGRRIDDVADGELAPETKITELDAIRKSLDNIDDSSDPVLVALADAARRFPVPIAMFAELIDGARMEIDWTGCRDFDELIVYCRRGAGTIGKLCLSIFGPVSTATSRYAEQLGIALQQTNILRDVREDFLNGRIYLPRDELDRLGVRLRLDDTGALDDPDGRLAALLRFSADRAADWYSLGLRLIPHLDRRSAACCAAMSGIYRRQLALIRASPAVVYDRRISLSGLKKAQVAAAALASSVTCGPAHGPLPADLGSHPSH</sequence>
<dbReference type="EC" id="2.5.1.-"/>
<dbReference type="EMBL" id="LT708304">
    <property type="protein sequence ID" value="SIU02059.1"/>
    <property type="molecule type" value="Genomic_DNA"/>
</dbReference>
<dbReference type="RefSeq" id="NP_857071.1">
    <property type="nucleotide sequence ID" value="NC_002945.3"/>
</dbReference>
<dbReference type="SMR" id="P65861"/>
<dbReference type="KEGG" id="mbo:BQ2027_MB3430C"/>
<dbReference type="PATRIC" id="fig|233413.5.peg.3765"/>
<dbReference type="UniPathway" id="UPA00799"/>
<dbReference type="Proteomes" id="UP000001419">
    <property type="component" value="Chromosome"/>
</dbReference>
<dbReference type="GO" id="GO:0046905">
    <property type="term" value="F:15-cis-phytoene synthase activity"/>
    <property type="evidence" value="ECO:0000250"/>
    <property type="project" value="UniProtKB"/>
</dbReference>
<dbReference type="GO" id="GO:0004311">
    <property type="term" value="F:geranylgeranyl diphosphate synthase activity"/>
    <property type="evidence" value="ECO:0007669"/>
    <property type="project" value="InterPro"/>
</dbReference>
<dbReference type="GO" id="GO:0046872">
    <property type="term" value="F:metal ion binding"/>
    <property type="evidence" value="ECO:0007669"/>
    <property type="project" value="UniProtKB-KW"/>
</dbReference>
<dbReference type="GO" id="GO:0051996">
    <property type="term" value="F:squalene synthase [NAD(P)H] activity"/>
    <property type="evidence" value="ECO:0007669"/>
    <property type="project" value="InterPro"/>
</dbReference>
<dbReference type="GO" id="GO:0016117">
    <property type="term" value="P:carotenoid biosynthetic process"/>
    <property type="evidence" value="ECO:0000250"/>
    <property type="project" value="UniProtKB"/>
</dbReference>
<dbReference type="CDD" id="cd00683">
    <property type="entry name" value="Trans_IPPS_HH"/>
    <property type="match status" value="1"/>
</dbReference>
<dbReference type="Gene3D" id="1.10.600.10">
    <property type="entry name" value="Farnesyl Diphosphate Synthase"/>
    <property type="match status" value="1"/>
</dbReference>
<dbReference type="InterPro" id="IPR008949">
    <property type="entry name" value="Isoprenoid_synthase_dom_sf"/>
</dbReference>
<dbReference type="InterPro" id="IPR017828">
    <property type="entry name" value="SQ_synth_HpnD-like"/>
</dbReference>
<dbReference type="InterPro" id="IPR002060">
    <property type="entry name" value="Squ/phyt_synthse"/>
</dbReference>
<dbReference type="InterPro" id="IPR019845">
    <property type="entry name" value="Squalene/phytoene_synthase_CS"/>
</dbReference>
<dbReference type="InterPro" id="IPR044843">
    <property type="entry name" value="Trans_IPPS_bact-type"/>
</dbReference>
<dbReference type="InterPro" id="IPR033904">
    <property type="entry name" value="Trans_IPPS_HH"/>
</dbReference>
<dbReference type="NCBIfam" id="TIGR03465">
    <property type="entry name" value="HpnD"/>
    <property type="match status" value="1"/>
</dbReference>
<dbReference type="PANTHER" id="PTHR31480">
    <property type="entry name" value="BIFUNCTIONAL LYCOPENE CYCLASE/PHYTOENE SYNTHASE"/>
    <property type="match status" value="1"/>
</dbReference>
<dbReference type="Pfam" id="PF00494">
    <property type="entry name" value="SQS_PSY"/>
    <property type="match status" value="1"/>
</dbReference>
<dbReference type="SFLD" id="SFLDS00005">
    <property type="entry name" value="Isoprenoid_Synthase_Type_I"/>
    <property type="match status" value="1"/>
</dbReference>
<dbReference type="SFLD" id="SFLDG01212">
    <property type="entry name" value="Phytoene_synthase_like"/>
    <property type="match status" value="1"/>
</dbReference>
<dbReference type="SUPFAM" id="SSF48576">
    <property type="entry name" value="Terpenoid synthases"/>
    <property type="match status" value="1"/>
</dbReference>
<dbReference type="PROSITE" id="PS01044">
    <property type="entry name" value="SQUALEN_PHYTOEN_SYN_1"/>
    <property type="match status" value="1"/>
</dbReference>
<dbReference type="PROSITE" id="PS01045">
    <property type="entry name" value="SQUALEN_PHYTOEN_SYN_2"/>
    <property type="match status" value="1"/>
</dbReference>